<name>IL13_PIG</name>
<organism>
    <name type="scientific">Sus scrofa</name>
    <name type="common">Pig</name>
    <dbReference type="NCBI Taxonomy" id="9823"/>
    <lineage>
        <taxon>Eukaryota</taxon>
        <taxon>Metazoa</taxon>
        <taxon>Chordata</taxon>
        <taxon>Craniata</taxon>
        <taxon>Vertebrata</taxon>
        <taxon>Euteleostomi</taxon>
        <taxon>Mammalia</taxon>
        <taxon>Eutheria</taxon>
        <taxon>Laurasiatheria</taxon>
        <taxon>Artiodactyla</taxon>
        <taxon>Suina</taxon>
        <taxon>Suidae</taxon>
        <taxon>Sus</taxon>
    </lineage>
</organism>
<evidence type="ECO:0000250" key="1"/>
<evidence type="ECO:0000250" key="2">
    <source>
        <dbReference type="UniProtKB" id="P20109"/>
    </source>
</evidence>
<evidence type="ECO:0000250" key="3">
    <source>
        <dbReference type="UniProtKB" id="P35225"/>
    </source>
</evidence>
<evidence type="ECO:0000250" key="4">
    <source>
        <dbReference type="UniProtKB" id="P42203"/>
    </source>
</evidence>
<evidence type="ECO:0000255" key="5"/>
<evidence type="ECO:0000305" key="6"/>
<gene>
    <name type="primary">IL13</name>
</gene>
<proteinExistence type="evidence at transcript level"/>
<keyword id="KW-0202">Cytokine</keyword>
<keyword id="KW-1015">Disulfide bond</keyword>
<keyword id="KW-0325">Glycoprotein</keyword>
<keyword id="KW-1185">Reference proteome</keyword>
<keyword id="KW-0964">Secreted</keyword>
<keyword id="KW-0732">Signal</keyword>
<sequence length="131" mass="14452">MALWLTLVIALTCFGGLASPGPVPPHSTALKELIEELVNITQNQKTPLCNGSMVWSVNLTTSMQYCAALESLINISDCSAIQKTQRMLSALCSHKPPSEQVPGKHIRDTKIEVAQFVKDLLKHLRMIFRHG</sequence>
<comment type="function">
    <text evidence="2 3 4">Cytokine that plays important roles in allergic inflammation and immune response to parasite infection. Synergizes with IL2 in regulating interferon-gamma synthesis. Stimulates B-cell proliferation, and activation of eosinophils, basophils, and mast cells (By similarity). Plays an important role in controlling IL33 activity by modulating the production of transmembrane and soluble forms of interleukin-1 receptor-like 1/IL1RL1 (By similarity). Displays the capacity to antagonize Th1-driven proinflammatory immune response and downregulates synthesis of many proinflammatory cytokines including IL1, IL6, IL10, IL12 and TNF-alpha through a mechanism that partially involves suppression of NF-kappa-B (By similarity). Also functions on nonhematopoietic cells, including endothelial cells where it induces vascular cell adhesion protein 1/VCAM1, which is important in the recruitment of eosinophils. Exerts its biological effects through its receptors which comprises the IL4R chain and the IL13RA1 chain, to activate JAK1 and TYK2, leading to the activation of STAT6. Aside from IL13RA1, another receptor IL13RA2 acts as a high affinity decoy for IL13 and mediates internalization and depletion of extracellular IL13 (By similarity).</text>
</comment>
<comment type="subunit">
    <text evidence="1">Interacts with IL13RA2.</text>
</comment>
<comment type="subcellular location">
    <subcellularLocation>
        <location>Secreted</location>
    </subcellularLocation>
</comment>
<comment type="similarity">
    <text evidence="6">Belongs to the IL-4/IL-13 family.</text>
</comment>
<protein>
    <recommendedName>
        <fullName>Interleukin-13</fullName>
        <shortName>IL-13</shortName>
    </recommendedName>
</protein>
<feature type="signal peptide" evidence="5">
    <location>
        <begin position="1"/>
        <end position="18"/>
    </location>
</feature>
<feature type="chain" id="PRO_0000015552" description="Interleukin-13">
    <location>
        <begin position="19"/>
        <end position="131"/>
    </location>
</feature>
<feature type="glycosylation site" description="N-linked (GlcNAc...) asparagine" evidence="5">
    <location>
        <position position="39"/>
    </location>
</feature>
<feature type="glycosylation site" description="N-linked (GlcNAc...) asparagine" evidence="5">
    <location>
        <position position="50"/>
    </location>
</feature>
<feature type="glycosylation site" description="N-linked (GlcNAc...) asparagine" evidence="5">
    <location>
        <position position="58"/>
    </location>
</feature>
<feature type="glycosylation site" description="N-linked (GlcNAc...) asparagine" evidence="5">
    <location>
        <position position="74"/>
    </location>
</feature>
<feature type="disulfide bond" evidence="3">
    <location>
        <begin position="49"/>
        <end position="78"/>
    </location>
</feature>
<feature type="disulfide bond" evidence="3">
    <location>
        <begin position="66"/>
        <end position="92"/>
    </location>
</feature>
<accession>Q95J68</accession>
<dbReference type="EMBL" id="AF385625">
    <property type="protein sequence ID" value="AAK68108.1"/>
    <property type="molecule type" value="Genomic_DNA"/>
</dbReference>
<dbReference type="EMBL" id="AF385626">
    <property type="protein sequence ID" value="AAK68109.2"/>
    <property type="molecule type" value="mRNA"/>
</dbReference>
<dbReference type="RefSeq" id="NP_998968.1">
    <property type="nucleotide sequence ID" value="NM_213803.1"/>
</dbReference>
<dbReference type="SMR" id="Q95J68"/>
<dbReference type="FunCoup" id="Q95J68">
    <property type="interactions" value="172"/>
</dbReference>
<dbReference type="STRING" id="9823.ENSSSCP00000030285"/>
<dbReference type="GlyCosmos" id="Q95J68">
    <property type="glycosylation" value="4 sites, No reported glycans"/>
</dbReference>
<dbReference type="GlyGen" id="Q95J68">
    <property type="glycosylation" value="4 sites"/>
</dbReference>
<dbReference type="PaxDb" id="9823-ENSSSCP00000015192"/>
<dbReference type="Ensembl" id="ENSSSCT00000033118.3">
    <property type="protein sequence ID" value="ENSSSCP00000030285.2"/>
    <property type="gene ID" value="ENSSSCG00000014281.4"/>
</dbReference>
<dbReference type="Ensembl" id="ENSSSCT00015052193.1">
    <property type="protein sequence ID" value="ENSSSCP00015020861.1"/>
    <property type="gene ID" value="ENSSSCG00015039152.1"/>
</dbReference>
<dbReference type="Ensembl" id="ENSSSCT00025078103.1">
    <property type="protein sequence ID" value="ENSSSCP00025033856.1"/>
    <property type="gene ID" value="ENSSSCG00025057113.1"/>
</dbReference>
<dbReference type="Ensembl" id="ENSSSCT00030076776.1">
    <property type="protein sequence ID" value="ENSSSCP00030035048.1"/>
    <property type="gene ID" value="ENSSSCG00030055116.1"/>
</dbReference>
<dbReference type="Ensembl" id="ENSSSCT00035029933.1">
    <property type="protein sequence ID" value="ENSSSCP00035011602.1"/>
    <property type="gene ID" value="ENSSSCG00035022892.1"/>
</dbReference>
<dbReference type="Ensembl" id="ENSSSCT00040030432.1">
    <property type="protein sequence ID" value="ENSSSCP00040012708.1"/>
    <property type="gene ID" value="ENSSSCG00040022699.1"/>
</dbReference>
<dbReference type="Ensembl" id="ENSSSCT00045024503.1">
    <property type="protein sequence ID" value="ENSSSCP00045016931.1"/>
    <property type="gene ID" value="ENSSSCG00045014376.1"/>
</dbReference>
<dbReference type="Ensembl" id="ENSSSCT00050104940.1">
    <property type="protein sequence ID" value="ENSSSCP00050046095.1"/>
    <property type="gene ID" value="ENSSSCG00050076393.1"/>
</dbReference>
<dbReference type="Ensembl" id="ENSSSCT00055007531.1">
    <property type="protein sequence ID" value="ENSSSCP00055005964.1"/>
    <property type="gene ID" value="ENSSSCG00055003836.1"/>
</dbReference>
<dbReference type="Ensembl" id="ENSSSCT00060074655.1">
    <property type="protein sequence ID" value="ENSSSCP00060032223.1"/>
    <property type="gene ID" value="ENSSSCG00060054819.1"/>
</dbReference>
<dbReference type="Ensembl" id="ENSSSCT00065029413.1">
    <property type="protein sequence ID" value="ENSSSCP00065012006.1"/>
    <property type="gene ID" value="ENSSSCG00065022117.1"/>
</dbReference>
<dbReference type="Ensembl" id="ENSSSCT00070039741.1">
    <property type="protein sequence ID" value="ENSSSCP00070033287.1"/>
    <property type="gene ID" value="ENSSSCG00070020046.1"/>
</dbReference>
<dbReference type="Ensembl" id="ENSSSCT00085049006">
    <property type="protein sequence ID" value="ENSSSCP00085034368"/>
    <property type="gene ID" value="ENSSSCG00085025497"/>
</dbReference>
<dbReference type="Ensembl" id="ENSSSCT00090048952">
    <property type="protein sequence ID" value="ENSSSCP00090030363"/>
    <property type="gene ID" value="ENSSSCG00090027690"/>
</dbReference>
<dbReference type="Ensembl" id="ENSSSCT00105059500">
    <property type="protein sequence ID" value="ENSSSCP00105041920"/>
    <property type="gene ID" value="ENSSSCG00105031355"/>
</dbReference>
<dbReference type="Ensembl" id="ENSSSCT00110019564">
    <property type="protein sequence ID" value="ENSSSCP00110013293"/>
    <property type="gene ID" value="ENSSSCG00110010092"/>
</dbReference>
<dbReference type="Ensembl" id="ENSSSCT00130068613">
    <property type="protein sequence ID" value="ENSSSCP00130049338"/>
    <property type="gene ID" value="ENSSSCG00130035087"/>
</dbReference>
<dbReference type="GeneID" id="396721"/>
<dbReference type="KEGG" id="ssc:396721"/>
<dbReference type="CTD" id="3596"/>
<dbReference type="VGNC" id="VGNC:99763">
    <property type="gene designation" value="IL13"/>
</dbReference>
<dbReference type="eggNOG" id="ENOG502SZKX">
    <property type="taxonomic scope" value="Eukaryota"/>
</dbReference>
<dbReference type="GeneTree" id="ENSGT00390000003225"/>
<dbReference type="InParanoid" id="Q95J68"/>
<dbReference type="OMA" id="KTPLCNG"/>
<dbReference type="OrthoDB" id="9447464at2759"/>
<dbReference type="TreeFam" id="TF336383"/>
<dbReference type="Reactome" id="R-SSC-6785807">
    <property type="pathway name" value="Interleukin-4 and Interleukin-13 signaling"/>
</dbReference>
<dbReference type="Proteomes" id="UP000008227">
    <property type="component" value="Chromosome 2"/>
</dbReference>
<dbReference type="Proteomes" id="UP000314985">
    <property type="component" value="Chromosome 2"/>
</dbReference>
<dbReference type="Proteomes" id="UP000694570">
    <property type="component" value="Unplaced"/>
</dbReference>
<dbReference type="Proteomes" id="UP000694571">
    <property type="component" value="Unplaced"/>
</dbReference>
<dbReference type="Proteomes" id="UP000694720">
    <property type="component" value="Unplaced"/>
</dbReference>
<dbReference type="Proteomes" id="UP000694722">
    <property type="component" value="Unplaced"/>
</dbReference>
<dbReference type="Proteomes" id="UP000694723">
    <property type="component" value="Unplaced"/>
</dbReference>
<dbReference type="Proteomes" id="UP000694724">
    <property type="component" value="Unplaced"/>
</dbReference>
<dbReference type="Proteomes" id="UP000694725">
    <property type="component" value="Unplaced"/>
</dbReference>
<dbReference type="Proteomes" id="UP000694726">
    <property type="component" value="Unplaced"/>
</dbReference>
<dbReference type="Proteomes" id="UP000694727">
    <property type="component" value="Unplaced"/>
</dbReference>
<dbReference type="Proteomes" id="UP000694728">
    <property type="component" value="Unplaced"/>
</dbReference>
<dbReference type="Bgee" id="ENSSSCG00000014281">
    <property type="expression patterns" value="Expressed in oocyte and 5 other cell types or tissues"/>
</dbReference>
<dbReference type="GO" id="GO:0005737">
    <property type="term" value="C:cytoplasm"/>
    <property type="evidence" value="ECO:0007669"/>
    <property type="project" value="Ensembl"/>
</dbReference>
<dbReference type="GO" id="GO:0009897">
    <property type="term" value="C:external side of plasma membrane"/>
    <property type="evidence" value="ECO:0007669"/>
    <property type="project" value="Ensembl"/>
</dbReference>
<dbReference type="GO" id="GO:0005615">
    <property type="term" value="C:extracellular space"/>
    <property type="evidence" value="ECO:0000318"/>
    <property type="project" value="GO_Central"/>
</dbReference>
<dbReference type="GO" id="GO:0005125">
    <property type="term" value="F:cytokine activity"/>
    <property type="evidence" value="ECO:0007669"/>
    <property type="project" value="UniProtKB-KW"/>
</dbReference>
<dbReference type="GO" id="GO:0005144">
    <property type="term" value="F:interleukin-13 receptor binding"/>
    <property type="evidence" value="ECO:0000318"/>
    <property type="project" value="GO_Central"/>
</dbReference>
<dbReference type="GO" id="GO:0006955">
    <property type="term" value="P:immune response"/>
    <property type="evidence" value="ECO:0007669"/>
    <property type="project" value="InterPro"/>
</dbReference>
<dbReference type="GO" id="GO:0006954">
    <property type="term" value="P:inflammatory response"/>
    <property type="evidence" value="ECO:0000318"/>
    <property type="project" value="GO_Central"/>
</dbReference>
<dbReference type="GO" id="GO:0035772">
    <property type="term" value="P:interleukin-13-mediated signaling pathway"/>
    <property type="evidence" value="ECO:0007669"/>
    <property type="project" value="Ensembl"/>
</dbReference>
<dbReference type="GO" id="GO:0042116">
    <property type="term" value="P:macrophage activation"/>
    <property type="evidence" value="ECO:0007669"/>
    <property type="project" value="Ensembl"/>
</dbReference>
<dbReference type="GO" id="GO:1903660">
    <property type="term" value="P:negative regulation of complement-dependent cytotoxicity"/>
    <property type="evidence" value="ECO:0000315"/>
    <property type="project" value="AgBase"/>
</dbReference>
<dbReference type="GO" id="GO:2000352">
    <property type="term" value="P:negative regulation of endothelial cell apoptotic process"/>
    <property type="evidence" value="ECO:0000315"/>
    <property type="project" value="AgBase"/>
</dbReference>
<dbReference type="GO" id="GO:0050728">
    <property type="term" value="P:negative regulation of inflammatory response"/>
    <property type="evidence" value="ECO:0007669"/>
    <property type="project" value="Ensembl"/>
</dbReference>
<dbReference type="GO" id="GO:0120162">
    <property type="term" value="P:positive regulation of cold-induced thermogenesis"/>
    <property type="evidence" value="ECO:0007669"/>
    <property type="project" value="Ensembl"/>
</dbReference>
<dbReference type="GO" id="GO:0002639">
    <property type="term" value="P:positive regulation of immunoglobulin production"/>
    <property type="evidence" value="ECO:0000318"/>
    <property type="project" value="GO_Central"/>
</dbReference>
<dbReference type="GO" id="GO:0032733">
    <property type="term" value="P:positive regulation of interleukin-10 production"/>
    <property type="evidence" value="ECO:0007669"/>
    <property type="project" value="Ensembl"/>
</dbReference>
<dbReference type="GO" id="GO:0043032">
    <property type="term" value="P:positive regulation of macrophage activation"/>
    <property type="evidence" value="ECO:0007669"/>
    <property type="project" value="Ensembl"/>
</dbReference>
<dbReference type="GO" id="GO:0043306">
    <property type="term" value="P:positive regulation of mast cell degranulation"/>
    <property type="evidence" value="ECO:0007669"/>
    <property type="project" value="Ensembl"/>
</dbReference>
<dbReference type="GO" id="GO:0045944">
    <property type="term" value="P:positive regulation of transcription by RNA polymerase II"/>
    <property type="evidence" value="ECO:0007669"/>
    <property type="project" value="Ensembl"/>
</dbReference>
<dbReference type="GO" id="GO:0009624">
    <property type="term" value="P:response to nematode"/>
    <property type="evidence" value="ECO:0007669"/>
    <property type="project" value="Ensembl"/>
</dbReference>
<dbReference type="GO" id="GO:0010269">
    <property type="term" value="P:response to selenium ion"/>
    <property type="evidence" value="ECO:0007669"/>
    <property type="project" value="Ensembl"/>
</dbReference>
<dbReference type="FunFam" id="1.20.1250.10:FF:000029">
    <property type="entry name" value="Interleukin-13"/>
    <property type="match status" value="1"/>
</dbReference>
<dbReference type="Gene3D" id="1.20.1250.10">
    <property type="match status" value="1"/>
</dbReference>
<dbReference type="InterPro" id="IPR009079">
    <property type="entry name" value="4_helix_cytokine-like_core"/>
</dbReference>
<dbReference type="InterPro" id="IPR020470">
    <property type="entry name" value="IL-13"/>
</dbReference>
<dbReference type="InterPro" id="IPR001325">
    <property type="entry name" value="IL-4/IL-13"/>
</dbReference>
<dbReference type="InterPro" id="IPR018096">
    <property type="entry name" value="IL-4/IL-13_CS"/>
</dbReference>
<dbReference type="PANTHER" id="PTHR48486">
    <property type="entry name" value="INTERLEUKIN-13"/>
    <property type="match status" value="1"/>
</dbReference>
<dbReference type="PANTHER" id="PTHR48486:SF1">
    <property type="entry name" value="INTERLEUKIN-13"/>
    <property type="match status" value="1"/>
</dbReference>
<dbReference type="Pfam" id="PF03487">
    <property type="entry name" value="IL13"/>
    <property type="match status" value="1"/>
</dbReference>
<dbReference type="PRINTS" id="PR01929">
    <property type="entry name" value="INTRLEUKIN13"/>
</dbReference>
<dbReference type="SMART" id="SM00190">
    <property type="entry name" value="IL4_13"/>
    <property type="match status" value="1"/>
</dbReference>
<dbReference type="SUPFAM" id="SSF47266">
    <property type="entry name" value="4-helical cytokines"/>
    <property type="match status" value="1"/>
</dbReference>
<dbReference type="PROSITE" id="PS00838">
    <property type="entry name" value="INTERLEUKIN_4_13"/>
    <property type="match status" value="1"/>
</dbReference>
<reference key="1">
    <citation type="submission" date="2001-07" db="EMBL/GenBank/DDBJ databases">
        <title>Cloning and characterization of porcine interleukin-13.</title>
        <authorList>
            <person name="Johnson C.R."/>
            <person name="Murtaugh M.P."/>
        </authorList>
    </citation>
    <scope>NUCLEOTIDE SEQUENCE [GENOMIC DNA / MRNA]</scope>
    <source>
        <tissue>Blood</tissue>
    </source>
</reference>